<name>MGST1_BOVIN</name>
<dbReference type="EC" id="2.5.1.18" evidence="1"/>
<dbReference type="EMBL" id="AY334548">
    <property type="protein sequence ID" value="AAR00934.1"/>
    <property type="molecule type" value="mRNA"/>
</dbReference>
<dbReference type="RefSeq" id="NP_001007816.1">
    <property type="nucleotide sequence ID" value="NM_001007815.1"/>
</dbReference>
<dbReference type="SMR" id="Q64L89"/>
<dbReference type="FunCoup" id="Q64L89">
    <property type="interactions" value="423"/>
</dbReference>
<dbReference type="STRING" id="9913.ENSBTAP00000011257"/>
<dbReference type="PaxDb" id="9913-ENSBTAP00000011257"/>
<dbReference type="PeptideAtlas" id="Q64L89"/>
<dbReference type="GeneID" id="493719"/>
<dbReference type="KEGG" id="bta:493719"/>
<dbReference type="CTD" id="4257"/>
<dbReference type="eggNOG" id="ENOG502S0BD">
    <property type="taxonomic scope" value="Eukaryota"/>
</dbReference>
<dbReference type="InParanoid" id="Q64L89"/>
<dbReference type="OrthoDB" id="193139at2759"/>
<dbReference type="Proteomes" id="UP000009136">
    <property type="component" value="Unplaced"/>
</dbReference>
<dbReference type="GO" id="GO:0005783">
    <property type="term" value="C:endoplasmic reticulum"/>
    <property type="evidence" value="ECO:0000250"/>
    <property type="project" value="UniProtKB"/>
</dbReference>
<dbReference type="GO" id="GO:0005789">
    <property type="term" value="C:endoplasmic reticulum membrane"/>
    <property type="evidence" value="ECO:0007669"/>
    <property type="project" value="UniProtKB-SubCell"/>
</dbReference>
<dbReference type="GO" id="GO:0016020">
    <property type="term" value="C:membrane"/>
    <property type="evidence" value="ECO:0000250"/>
    <property type="project" value="UniProtKB"/>
</dbReference>
<dbReference type="GO" id="GO:0005741">
    <property type="term" value="C:mitochondrial outer membrane"/>
    <property type="evidence" value="ECO:0007669"/>
    <property type="project" value="UniProtKB-SubCell"/>
</dbReference>
<dbReference type="GO" id="GO:0005739">
    <property type="term" value="C:mitochondrion"/>
    <property type="evidence" value="ECO:0000318"/>
    <property type="project" value="GO_Central"/>
</dbReference>
<dbReference type="GO" id="GO:0004364">
    <property type="term" value="F:glutathione transferase activity"/>
    <property type="evidence" value="ECO:0000318"/>
    <property type="project" value="GO_Central"/>
</dbReference>
<dbReference type="FunFam" id="1.20.120.550:FF:000002">
    <property type="entry name" value="Microsomal glutathione S-transferase 1"/>
    <property type="match status" value="1"/>
</dbReference>
<dbReference type="Gene3D" id="1.20.120.550">
    <property type="entry name" value="Membrane associated eicosanoid/glutathione metabolism-like domain"/>
    <property type="match status" value="1"/>
</dbReference>
<dbReference type="InterPro" id="IPR023352">
    <property type="entry name" value="MAPEG-like_dom_sf"/>
</dbReference>
<dbReference type="InterPro" id="IPR001129">
    <property type="entry name" value="Membr-assoc_MAPEG"/>
</dbReference>
<dbReference type="InterPro" id="IPR040162">
    <property type="entry name" value="MGST1-like"/>
</dbReference>
<dbReference type="PANTHER" id="PTHR10689">
    <property type="entry name" value="MICROSOMAL GLUTATHIONE S-TRANSFERASE 1"/>
    <property type="match status" value="1"/>
</dbReference>
<dbReference type="PANTHER" id="PTHR10689:SF6">
    <property type="entry name" value="MICROSOMAL GLUTATHIONE S-TRANSFERASE 1"/>
    <property type="match status" value="1"/>
</dbReference>
<dbReference type="Pfam" id="PF01124">
    <property type="entry name" value="MAPEG"/>
    <property type="match status" value="1"/>
</dbReference>
<dbReference type="SUPFAM" id="SSF161084">
    <property type="entry name" value="MAPEG domain-like"/>
    <property type="match status" value="1"/>
</dbReference>
<sequence length="155" mass="17645">MANLSQLMENEVFMAFASYTTIVLSKMNFMSTATAFYRLTKKVFANPEDCAGFGKGENAKKYLRTDDRVERVRRAHLNDLENIVPFLGIGLLYSLSGPDLSTAILHFRLFVRARIYHTIAYLTPLPQPNRALAFFIGYGVTLSMAYRLLKSKLYL</sequence>
<gene>
    <name type="primary">MGST1</name>
</gene>
<organism>
    <name type="scientific">Bos taurus</name>
    <name type="common">Bovine</name>
    <dbReference type="NCBI Taxonomy" id="9913"/>
    <lineage>
        <taxon>Eukaryota</taxon>
        <taxon>Metazoa</taxon>
        <taxon>Chordata</taxon>
        <taxon>Craniata</taxon>
        <taxon>Vertebrata</taxon>
        <taxon>Euteleostomi</taxon>
        <taxon>Mammalia</taxon>
        <taxon>Eutheria</taxon>
        <taxon>Laurasiatheria</taxon>
        <taxon>Artiodactyla</taxon>
        <taxon>Ruminantia</taxon>
        <taxon>Pecora</taxon>
        <taxon>Bovidae</taxon>
        <taxon>Bovinae</taxon>
        <taxon>Bos</taxon>
    </lineage>
</organism>
<proteinExistence type="evidence at transcript level"/>
<feature type="chain" id="PRO_0000246086" description="Microsomal glutathione S-transferase 1">
    <location>
        <begin position="1"/>
        <end position="155"/>
    </location>
</feature>
<feature type="topological domain" description="Lumenal" evidence="1">
    <location>
        <begin position="3"/>
        <end position="9"/>
    </location>
</feature>
<feature type="transmembrane region" description="Helical" evidence="3">
    <location>
        <begin position="10"/>
        <end position="33"/>
    </location>
</feature>
<feature type="topological domain" description="Cytoplasmic" evidence="1">
    <location>
        <begin position="34"/>
        <end position="62"/>
    </location>
</feature>
<feature type="transmembrane region" description="Helical" evidence="3">
    <location>
        <begin position="63"/>
        <end position="96"/>
    </location>
</feature>
<feature type="topological domain" description="Lumenal" evidence="1">
    <location>
        <begin position="97"/>
        <end position="99"/>
    </location>
</feature>
<feature type="transmembrane region" description="Helical" evidence="3">
    <location>
        <begin position="100"/>
        <end position="123"/>
    </location>
</feature>
<feature type="topological domain" description="Cytoplasmic" evidence="1">
    <location>
        <begin position="124"/>
        <end position="128"/>
    </location>
</feature>
<feature type="transmembrane region" description="Helical" evidence="3">
    <location>
        <begin position="129"/>
        <end position="148"/>
    </location>
</feature>
<feature type="topological domain" description="Lumenal" evidence="1">
    <location>
        <begin position="149"/>
        <end position="155"/>
    </location>
</feature>
<feature type="binding site" evidence="1">
    <location>
        <position position="38"/>
    </location>
    <ligand>
        <name>glutathione</name>
        <dbReference type="ChEBI" id="CHEBI:57925"/>
    </ligand>
</feature>
<feature type="binding site" evidence="1">
    <location>
        <position position="73"/>
    </location>
    <ligand>
        <name>glutathione</name>
        <dbReference type="ChEBI" id="CHEBI:57925"/>
    </ligand>
</feature>
<feature type="binding site" evidence="1">
    <location>
        <position position="74"/>
    </location>
    <ligand>
        <name>glutathione</name>
        <dbReference type="ChEBI" id="CHEBI:57925"/>
    </ligand>
</feature>
<feature type="binding site" evidence="1">
    <location>
        <position position="76"/>
    </location>
    <ligand>
        <name>glutathione</name>
        <dbReference type="ChEBI" id="CHEBI:57925"/>
    </ligand>
</feature>
<feature type="binding site" evidence="1">
    <location>
        <position position="81"/>
    </location>
    <ligand>
        <name>glutathione</name>
        <dbReference type="ChEBI" id="CHEBI:57925"/>
    </ligand>
</feature>
<feature type="binding site" evidence="1">
    <location>
        <position position="121"/>
    </location>
    <ligand>
        <name>glutathione</name>
        <dbReference type="ChEBI" id="CHEBI:57925"/>
    </ligand>
</feature>
<feature type="modified residue" description="N6-acetyllysine" evidence="2">
    <location>
        <position position="42"/>
    </location>
</feature>
<feature type="modified residue" description="N6-acetyllysine" evidence="2">
    <location>
        <position position="55"/>
    </location>
</feature>
<feature type="modified residue" description="N6-acetyllysine" evidence="2">
    <location>
        <position position="60"/>
    </location>
</feature>
<evidence type="ECO:0000250" key="1">
    <source>
        <dbReference type="UniProtKB" id="P08011"/>
    </source>
</evidence>
<evidence type="ECO:0000250" key="2">
    <source>
        <dbReference type="UniProtKB" id="Q91VS7"/>
    </source>
</evidence>
<evidence type="ECO:0000255" key="3"/>
<evidence type="ECO:0000305" key="4"/>
<protein>
    <recommendedName>
        <fullName>Microsomal glutathione S-transferase 1</fullName>
        <shortName>Microsomal GST-1</shortName>
        <ecNumber evidence="1">2.5.1.18</ecNumber>
    </recommendedName>
</protein>
<reference key="1">
    <citation type="submission" date="2003-07" db="EMBL/GenBank/DDBJ databases">
        <title>Characterization of bovine microsomal glutathione-S-transferase 1.</title>
        <authorList>
            <person name="Maeda A."/>
            <person name="Palczewski K."/>
        </authorList>
    </citation>
    <scope>NUCLEOTIDE SEQUENCE [MRNA]</scope>
</reference>
<comment type="function">
    <text evidence="1">Conjugation of reduced glutathione to a wide number of exogenous and endogenous hydrophobic electrophiles.</text>
</comment>
<comment type="catalytic activity">
    <reaction evidence="1">
        <text>RX + glutathione = an S-substituted glutathione + a halide anion + H(+)</text>
        <dbReference type="Rhea" id="RHEA:16437"/>
        <dbReference type="ChEBI" id="CHEBI:15378"/>
        <dbReference type="ChEBI" id="CHEBI:16042"/>
        <dbReference type="ChEBI" id="CHEBI:17792"/>
        <dbReference type="ChEBI" id="CHEBI:57925"/>
        <dbReference type="ChEBI" id="CHEBI:90779"/>
        <dbReference type="EC" id="2.5.1.18"/>
    </reaction>
    <physiologicalReaction direction="left-to-right" evidence="1">
        <dbReference type="Rhea" id="RHEA:16438"/>
    </physiologicalReaction>
</comment>
<comment type="subunit">
    <text evidence="1">Homotrimer; The trimer binds only one molecule of glutathione.</text>
</comment>
<comment type="subcellular location">
    <subcellularLocation>
        <location evidence="1">Endoplasmic reticulum membrane</location>
        <topology evidence="3">Multi-pass membrane protein</topology>
    </subcellularLocation>
    <subcellularLocation>
        <location evidence="1">Mitochondrion outer membrane</location>
    </subcellularLocation>
</comment>
<comment type="similarity">
    <text evidence="4">Belongs to the MAPEG family.</text>
</comment>
<keyword id="KW-0007">Acetylation</keyword>
<keyword id="KW-0256">Endoplasmic reticulum</keyword>
<keyword id="KW-0472">Membrane</keyword>
<keyword id="KW-0496">Mitochondrion</keyword>
<keyword id="KW-1000">Mitochondrion outer membrane</keyword>
<keyword id="KW-1185">Reference proteome</keyword>
<keyword id="KW-0808">Transferase</keyword>
<keyword id="KW-0812">Transmembrane</keyword>
<keyword id="KW-1133">Transmembrane helix</keyword>
<accession>Q64L89</accession>